<dbReference type="EC" id="2.7.7.-" evidence="2"/>
<dbReference type="EMBL" id="CP001404">
    <property type="protein sequence ID" value="ACP48764.1"/>
    <property type="molecule type" value="Genomic_DNA"/>
</dbReference>
<dbReference type="RefSeq" id="WP_012713609.1">
    <property type="nucleotide sequence ID" value="NC_012623.1"/>
</dbReference>
<dbReference type="SMR" id="C3NI04"/>
<dbReference type="GeneID" id="7810640"/>
<dbReference type="KEGG" id="sin:YN1551_1682"/>
<dbReference type="HOGENOM" id="CLU_056123_0_0_2"/>
<dbReference type="Proteomes" id="UP000006818">
    <property type="component" value="Chromosome"/>
</dbReference>
<dbReference type="GO" id="GO:0000428">
    <property type="term" value="C:DNA-directed RNA polymerase complex"/>
    <property type="evidence" value="ECO:0007669"/>
    <property type="project" value="UniProtKB-KW"/>
</dbReference>
<dbReference type="GO" id="GO:1990077">
    <property type="term" value="C:primosome complex"/>
    <property type="evidence" value="ECO:0007669"/>
    <property type="project" value="UniProtKB-KW"/>
</dbReference>
<dbReference type="GO" id="GO:0003899">
    <property type="term" value="F:DNA-directed RNA polymerase activity"/>
    <property type="evidence" value="ECO:0007669"/>
    <property type="project" value="InterPro"/>
</dbReference>
<dbReference type="GO" id="GO:0046872">
    <property type="term" value="F:metal ion binding"/>
    <property type="evidence" value="ECO:0007669"/>
    <property type="project" value="UniProtKB-KW"/>
</dbReference>
<dbReference type="GO" id="GO:0006269">
    <property type="term" value="P:DNA replication, synthesis of primer"/>
    <property type="evidence" value="ECO:0007669"/>
    <property type="project" value="UniProtKB-UniRule"/>
</dbReference>
<dbReference type="CDD" id="cd04860">
    <property type="entry name" value="AE_Prim_S"/>
    <property type="match status" value="1"/>
</dbReference>
<dbReference type="FunFam" id="3.90.920.10:FF:000006">
    <property type="entry name" value="DNA primase small subunit PriS"/>
    <property type="match status" value="1"/>
</dbReference>
<dbReference type="Gene3D" id="3.90.920.10">
    <property type="entry name" value="DNA primase, PRIM domain"/>
    <property type="match status" value="1"/>
</dbReference>
<dbReference type="HAMAP" id="MF_00700">
    <property type="entry name" value="DNA_primase_sml_arc"/>
    <property type="match status" value="1"/>
</dbReference>
<dbReference type="InterPro" id="IPR002755">
    <property type="entry name" value="DNA_primase_S"/>
</dbReference>
<dbReference type="InterPro" id="IPR014052">
    <property type="entry name" value="DNA_primase_ssu_euk/arc"/>
</dbReference>
<dbReference type="InterPro" id="IPR023639">
    <property type="entry name" value="DNA_primase_ssu_PriS"/>
</dbReference>
<dbReference type="NCBIfam" id="NF001641">
    <property type="entry name" value="PRK00419.1-3"/>
    <property type="match status" value="1"/>
</dbReference>
<dbReference type="PANTHER" id="PTHR10536">
    <property type="entry name" value="DNA PRIMASE SMALL SUBUNIT"/>
    <property type="match status" value="1"/>
</dbReference>
<dbReference type="Pfam" id="PF01896">
    <property type="entry name" value="DNA_primase_S"/>
    <property type="match status" value="1"/>
</dbReference>
<dbReference type="Pfam" id="PF20873">
    <property type="entry name" value="PriS_C"/>
    <property type="match status" value="1"/>
</dbReference>
<dbReference type="SUPFAM" id="SSF56747">
    <property type="entry name" value="Prim-pol domain"/>
    <property type="match status" value="1"/>
</dbReference>
<accession>C3NI04</accession>
<name>PRIS_SACI1</name>
<proteinExistence type="inferred from homology"/>
<gene>
    <name evidence="2" type="primary">priS</name>
    <name type="synonym">priA</name>
    <name type="ordered locus">YN1551_1682</name>
</gene>
<feature type="chain" id="PRO_1000212640" description="DNA primase small subunit PriS">
    <location>
        <begin position="1"/>
        <end position="330"/>
    </location>
</feature>
<feature type="active site" evidence="2">
    <location>
        <position position="101"/>
    </location>
</feature>
<feature type="active site" evidence="2">
    <location>
        <position position="103"/>
    </location>
</feature>
<feature type="active site" evidence="2">
    <location>
        <position position="235"/>
    </location>
</feature>
<feature type="binding site" evidence="1">
    <location>
        <position position="116"/>
    </location>
    <ligand>
        <name>Zn(2+)</name>
        <dbReference type="ChEBI" id="CHEBI:29105"/>
    </ligand>
</feature>
<feature type="binding site" evidence="1">
    <location>
        <position position="119"/>
    </location>
    <ligand>
        <name>Zn(2+)</name>
        <dbReference type="ChEBI" id="CHEBI:29105"/>
    </ligand>
</feature>
<feature type="binding site" evidence="1">
    <location>
        <position position="128"/>
    </location>
    <ligand>
        <name>Zn(2+)</name>
        <dbReference type="ChEBI" id="CHEBI:29105"/>
    </ligand>
</feature>
<feature type="binding site" evidence="1">
    <location>
        <position position="131"/>
    </location>
    <ligand>
        <name>Zn(2+)</name>
        <dbReference type="ChEBI" id="CHEBI:29105"/>
    </ligand>
</feature>
<protein>
    <recommendedName>
        <fullName evidence="2">DNA primase small subunit PriS</fullName>
        <ecNumber evidence="2">2.7.7.-</ecNumber>
    </recommendedName>
</protein>
<comment type="function">
    <text evidence="2">Catalytic subunit of DNA primase, an RNA polymerase that catalyzes the synthesis of short RNA molecules used as primers for DNA polymerase during DNA replication. The small subunit contains the primase catalytic core and has DNA synthesis activity on its own. Binding to the large subunit stabilizes and modulates the activity, increasing the rate of DNA synthesis while decreasing the length of the DNA fragments, and conferring RNA synthesis capability. The DNA polymerase activity may enable DNA primase to also catalyze primer extension after primer synthesis. May also play a role in DNA repair.</text>
</comment>
<comment type="cofactor">
    <cofactor evidence="2">
        <name>Mg(2+)</name>
        <dbReference type="ChEBI" id="CHEBI:18420"/>
    </cofactor>
    <cofactor evidence="2">
        <name>Mn(2+)</name>
        <dbReference type="ChEBI" id="CHEBI:29035"/>
    </cofactor>
</comment>
<comment type="subunit">
    <text evidence="2">Heterodimer of a small subunit (PriS) and a large subunit (PriL).</text>
</comment>
<comment type="similarity">
    <text evidence="2">Belongs to the eukaryotic-type primase small subunit family.</text>
</comment>
<reference key="1">
    <citation type="journal article" date="2009" name="Proc. Natl. Acad. Sci. U.S.A.">
        <title>Biogeography of the Sulfolobus islandicus pan-genome.</title>
        <authorList>
            <person name="Reno M.L."/>
            <person name="Held N.L."/>
            <person name="Fields C.J."/>
            <person name="Burke P.V."/>
            <person name="Whitaker R.J."/>
        </authorList>
    </citation>
    <scope>NUCLEOTIDE SEQUENCE [LARGE SCALE GENOMIC DNA]</scope>
    <source>
        <strain>Y.N.15.51 / Yellowstone #2</strain>
    </source>
</reference>
<keyword id="KW-0235">DNA replication</keyword>
<keyword id="KW-0240">DNA-directed RNA polymerase</keyword>
<keyword id="KW-0460">Magnesium</keyword>
<keyword id="KW-0464">Manganese</keyword>
<keyword id="KW-0479">Metal-binding</keyword>
<keyword id="KW-0548">Nucleotidyltransferase</keyword>
<keyword id="KW-0639">Primosome</keyword>
<keyword id="KW-0804">Transcription</keyword>
<keyword id="KW-0808">Transferase</keyword>
<keyword id="KW-0862">Zinc</keyword>
<organism>
    <name type="scientific">Saccharolobus islandicus (strain Y.N.15.51 / Yellowstone #2)</name>
    <name type="common">Sulfolobus islandicus</name>
    <dbReference type="NCBI Taxonomy" id="419942"/>
    <lineage>
        <taxon>Archaea</taxon>
        <taxon>Thermoproteota</taxon>
        <taxon>Thermoprotei</taxon>
        <taxon>Sulfolobales</taxon>
        <taxon>Sulfolobaceae</taxon>
        <taxon>Saccharolobus</taxon>
    </lineage>
</organism>
<sequence>MGTFTLHQGQSNLIKSFFRNYYLNAELGLPNDMELREFALQPFGSDTYIRHLSFSSSEELRDYLVNRNLPLHLFYSSARYQLPSARDMEEKAWMGSDLLFDIDADHICKLRSIRFCPVCGNAITSEKCERDNVETLEYVEMTSECIKRGLEEARNLVEILEDDFGLKPKVYFSGNRGFHVQVDCYGDCALLDSDERKEIAEYVMGVGVPSYPGGSESAPGWVGRKNRGINGVTIDGQVTIDVKRLIRIPNSLHGKSGLIVKEVTNLDDFEFNEALSPFTGYTIFLPYISIETEVLSRNIKLNRGVPIKIESSIGIYLHLKNLGEVKAYVR</sequence>
<evidence type="ECO:0000250" key="1"/>
<evidence type="ECO:0000255" key="2">
    <source>
        <dbReference type="HAMAP-Rule" id="MF_00700"/>
    </source>
</evidence>